<organism>
    <name type="scientific">Acaryochloris marina (strain MBIC 11017)</name>
    <dbReference type="NCBI Taxonomy" id="329726"/>
    <lineage>
        <taxon>Bacteria</taxon>
        <taxon>Bacillati</taxon>
        <taxon>Cyanobacteriota</taxon>
        <taxon>Cyanophyceae</taxon>
        <taxon>Acaryochloridales</taxon>
        <taxon>Acaryochloridaceae</taxon>
        <taxon>Acaryochloris</taxon>
    </lineage>
</organism>
<gene>
    <name evidence="1" type="primary">argG</name>
    <name type="ordered locus">AM1_4234</name>
</gene>
<name>ASSY_ACAM1</name>
<evidence type="ECO:0000255" key="1">
    <source>
        <dbReference type="HAMAP-Rule" id="MF_00005"/>
    </source>
</evidence>
<accession>B0CCQ2</accession>
<proteinExistence type="inferred from homology"/>
<comment type="catalytic activity">
    <reaction evidence="1">
        <text>L-citrulline + L-aspartate + ATP = 2-(N(omega)-L-arginino)succinate + AMP + diphosphate + H(+)</text>
        <dbReference type="Rhea" id="RHEA:10932"/>
        <dbReference type="ChEBI" id="CHEBI:15378"/>
        <dbReference type="ChEBI" id="CHEBI:29991"/>
        <dbReference type="ChEBI" id="CHEBI:30616"/>
        <dbReference type="ChEBI" id="CHEBI:33019"/>
        <dbReference type="ChEBI" id="CHEBI:57472"/>
        <dbReference type="ChEBI" id="CHEBI:57743"/>
        <dbReference type="ChEBI" id="CHEBI:456215"/>
        <dbReference type="EC" id="6.3.4.5"/>
    </reaction>
</comment>
<comment type="pathway">
    <text evidence="1">Amino-acid biosynthesis; L-arginine biosynthesis; L-arginine from L-ornithine and carbamoyl phosphate: step 2/3.</text>
</comment>
<comment type="subunit">
    <text evidence="1">Homotetramer.</text>
</comment>
<comment type="subcellular location">
    <subcellularLocation>
        <location evidence="1">Cytoplasm</location>
    </subcellularLocation>
</comment>
<comment type="similarity">
    <text evidence="1">Belongs to the argininosuccinate synthase family. Type 1 subfamily.</text>
</comment>
<sequence length="399" mass="43644">MGRAKKVVLAYSGGVDTSVCIPYLKHEWGVEEVITLAADLGQGDELEPIRKKALDAGAAQSLIADGTESFIADYAFPAIQANALYENRYPLSTALARPLIAKLLVEAAEIHGADAVAHGCTGKGNDQVRFDVSITALNPDIKVLAPAREWGMSREETIAYGEKYGVQSPVKKSSPYSIDRNLLGRSVEAGPLEDPWVEPLEEVYDLTKAIADTPDQPEYVDIDFAQGLPTQLNGQALSPVALVEQLNQIVGNHGVGRIDMVENRLVGIKSREIYEAPALLVLIQAHRELESLALTADVTHYKRGIEETYSQLVYNGLWFSPLKDALDAFIQQTQKQVTGTVRVKLFKGAATVVGRQSPHSLYTPDLATYGAEDAFDHKAAEGFIYVWGLPTRVWSQQQR</sequence>
<feature type="chain" id="PRO_1000073810" description="Argininosuccinate synthase">
    <location>
        <begin position="1"/>
        <end position="399"/>
    </location>
</feature>
<feature type="binding site" evidence="1">
    <location>
        <begin position="10"/>
        <end position="18"/>
    </location>
    <ligand>
        <name>ATP</name>
        <dbReference type="ChEBI" id="CHEBI:30616"/>
    </ligand>
</feature>
<feature type="binding site" evidence="1">
    <location>
        <position position="38"/>
    </location>
    <ligand>
        <name>ATP</name>
        <dbReference type="ChEBI" id="CHEBI:30616"/>
    </ligand>
</feature>
<feature type="binding site" evidence="1">
    <location>
        <position position="89"/>
    </location>
    <ligand>
        <name>L-citrulline</name>
        <dbReference type="ChEBI" id="CHEBI:57743"/>
    </ligand>
</feature>
<feature type="binding site" evidence="1">
    <location>
        <position position="119"/>
    </location>
    <ligand>
        <name>ATP</name>
        <dbReference type="ChEBI" id="CHEBI:30616"/>
    </ligand>
</feature>
<feature type="binding site" evidence="1">
    <location>
        <position position="121"/>
    </location>
    <ligand>
        <name>L-aspartate</name>
        <dbReference type="ChEBI" id="CHEBI:29991"/>
    </ligand>
</feature>
<feature type="binding site" evidence="1">
    <location>
        <position position="125"/>
    </location>
    <ligand>
        <name>L-aspartate</name>
        <dbReference type="ChEBI" id="CHEBI:29991"/>
    </ligand>
</feature>
<feature type="binding site" evidence="1">
    <location>
        <position position="125"/>
    </location>
    <ligand>
        <name>L-citrulline</name>
        <dbReference type="ChEBI" id="CHEBI:57743"/>
    </ligand>
</feature>
<feature type="binding site" evidence="1">
    <location>
        <position position="126"/>
    </location>
    <ligand>
        <name>L-aspartate</name>
        <dbReference type="ChEBI" id="CHEBI:29991"/>
    </ligand>
</feature>
<feature type="binding site" evidence="1">
    <location>
        <position position="129"/>
    </location>
    <ligand>
        <name>L-citrulline</name>
        <dbReference type="ChEBI" id="CHEBI:57743"/>
    </ligand>
</feature>
<feature type="binding site" evidence="1">
    <location>
        <position position="177"/>
    </location>
    <ligand>
        <name>L-citrulline</name>
        <dbReference type="ChEBI" id="CHEBI:57743"/>
    </ligand>
</feature>
<feature type="binding site" evidence="1">
    <location>
        <position position="186"/>
    </location>
    <ligand>
        <name>L-citrulline</name>
        <dbReference type="ChEBI" id="CHEBI:57743"/>
    </ligand>
</feature>
<feature type="binding site" evidence="1">
    <location>
        <position position="262"/>
    </location>
    <ligand>
        <name>L-citrulline</name>
        <dbReference type="ChEBI" id="CHEBI:57743"/>
    </ligand>
</feature>
<feature type="binding site" evidence="1">
    <location>
        <position position="274"/>
    </location>
    <ligand>
        <name>L-citrulline</name>
        <dbReference type="ChEBI" id="CHEBI:57743"/>
    </ligand>
</feature>
<reference key="1">
    <citation type="journal article" date="2008" name="Proc. Natl. Acad. Sci. U.S.A.">
        <title>Niche adaptation and genome expansion in the chlorophyll d-producing cyanobacterium Acaryochloris marina.</title>
        <authorList>
            <person name="Swingley W.D."/>
            <person name="Chen M."/>
            <person name="Cheung P.C."/>
            <person name="Conrad A.L."/>
            <person name="Dejesa L.C."/>
            <person name="Hao J."/>
            <person name="Honchak B.M."/>
            <person name="Karbach L.E."/>
            <person name="Kurdoglu A."/>
            <person name="Lahiri S."/>
            <person name="Mastrian S.D."/>
            <person name="Miyashita H."/>
            <person name="Page L."/>
            <person name="Ramakrishna P."/>
            <person name="Satoh S."/>
            <person name="Sattley W.M."/>
            <person name="Shimada Y."/>
            <person name="Taylor H.L."/>
            <person name="Tomo T."/>
            <person name="Tsuchiya T."/>
            <person name="Wang Z.T."/>
            <person name="Raymond J."/>
            <person name="Mimuro M."/>
            <person name="Blankenship R.E."/>
            <person name="Touchman J.W."/>
        </authorList>
    </citation>
    <scope>NUCLEOTIDE SEQUENCE [LARGE SCALE GENOMIC DNA]</scope>
    <source>
        <strain>MBIC 11017</strain>
    </source>
</reference>
<protein>
    <recommendedName>
        <fullName evidence="1">Argininosuccinate synthase</fullName>
        <ecNumber evidence="1">6.3.4.5</ecNumber>
    </recommendedName>
    <alternativeName>
        <fullName evidence="1">Citrulline--aspartate ligase</fullName>
    </alternativeName>
</protein>
<keyword id="KW-0028">Amino-acid biosynthesis</keyword>
<keyword id="KW-0055">Arginine biosynthesis</keyword>
<keyword id="KW-0067">ATP-binding</keyword>
<keyword id="KW-0963">Cytoplasm</keyword>
<keyword id="KW-0436">Ligase</keyword>
<keyword id="KW-0547">Nucleotide-binding</keyword>
<keyword id="KW-1185">Reference proteome</keyword>
<dbReference type="EC" id="6.3.4.5" evidence="1"/>
<dbReference type="EMBL" id="CP000828">
    <property type="protein sequence ID" value="ABW29214.1"/>
    <property type="molecule type" value="Genomic_DNA"/>
</dbReference>
<dbReference type="RefSeq" id="WP_012164545.1">
    <property type="nucleotide sequence ID" value="NC_009925.1"/>
</dbReference>
<dbReference type="SMR" id="B0CCQ2"/>
<dbReference type="STRING" id="329726.AM1_4234"/>
<dbReference type="KEGG" id="amr:AM1_4234"/>
<dbReference type="eggNOG" id="COG0137">
    <property type="taxonomic scope" value="Bacteria"/>
</dbReference>
<dbReference type="HOGENOM" id="CLU_032784_4_2_3"/>
<dbReference type="OrthoDB" id="9801641at2"/>
<dbReference type="UniPathway" id="UPA00068">
    <property type="reaction ID" value="UER00113"/>
</dbReference>
<dbReference type="Proteomes" id="UP000000268">
    <property type="component" value="Chromosome"/>
</dbReference>
<dbReference type="GO" id="GO:0005737">
    <property type="term" value="C:cytoplasm"/>
    <property type="evidence" value="ECO:0007669"/>
    <property type="project" value="UniProtKB-SubCell"/>
</dbReference>
<dbReference type="GO" id="GO:0004055">
    <property type="term" value="F:argininosuccinate synthase activity"/>
    <property type="evidence" value="ECO:0007669"/>
    <property type="project" value="UniProtKB-UniRule"/>
</dbReference>
<dbReference type="GO" id="GO:0005524">
    <property type="term" value="F:ATP binding"/>
    <property type="evidence" value="ECO:0007669"/>
    <property type="project" value="UniProtKB-UniRule"/>
</dbReference>
<dbReference type="GO" id="GO:0000053">
    <property type="term" value="P:argininosuccinate metabolic process"/>
    <property type="evidence" value="ECO:0007669"/>
    <property type="project" value="TreeGrafter"/>
</dbReference>
<dbReference type="GO" id="GO:0006526">
    <property type="term" value="P:L-arginine biosynthetic process"/>
    <property type="evidence" value="ECO:0007669"/>
    <property type="project" value="UniProtKB-UniRule"/>
</dbReference>
<dbReference type="GO" id="GO:0000050">
    <property type="term" value="P:urea cycle"/>
    <property type="evidence" value="ECO:0007669"/>
    <property type="project" value="TreeGrafter"/>
</dbReference>
<dbReference type="CDD" id="cd01999">
    <property type="entry name" value="ASS"/>
    <property type="match status" value="1"/>
</dbReference>
<dbReference type="FunFam" id="1.20.5.470:FF:000002">
    <property type="entry name" value="Argininosuccinate synthase"/>
    <property type="match status" value="1"/>
</dbReference>
<dbReference type="FunFam" id="3.40.50.620:FF:000019">
    <property type="entry name" value="Argininosuccinate synthase"/>
    <property type="match status" value="1"/>
</dbReference>
<dbReference type="FunFam" id="3.90.1260.10:FF:000007">
    <property type="entry name" value="Argininosuccinate synthase"/>
    <property type="match status" value="1"/>
</dbReference>
<dbReference type="Gene3D" id="3.90.1260.10">
    <property type="entry name" value="Argininosuccinate synthetase, chain A, domain 2"/>
    <property type="match status" value="1"/>
</dbReference>
<dbReference type="Gene3D" id="3.40.50.620">
    <property type="entry name" value="HUPs"/>
    <property type="match status" value="1"/>
</dbReference>
<dbReference type="Gene3D" id="1.20.5.470">
    <property type="entry name" value="Single helix bin"/>
    <property type="match status" value="1"/>
</dbReference>
<dbReference type="HAMAP" id="MF_00005">
    <property type="entry name" value="Arg_succ_synth_type1"/>
    <property type="match status" value="1"/>
</dbReference>
<dbReference type="InterPro" id="IPR048268">
    <property type="entry name" value="Arginosuc_syn_C"/>
</dbReference>
<dbReference type="InterPro" id="IPR048267">
    <property type="entry name" value="Arginosuc_syn_N"/>
</dbReference>
<dbReference type="InterPro" id="IPR001518">
    <property type="entry name" value="Arginosuc_synth"/>
</dbReference>
<dbReference type="InterPro" id="IPR018223">
    <property type="entry name" value="Arginosuc_synth_CS"/>
</dbReference>
<dbReference type="InterPro" id="IPR023434">
    <property type="entry name" value="Arginosuc_synth_type_1_subfam"/>
</dbReference>
<dbReference type="InterPro" id="IPR024074">
    <property type="entry name" value="AS_cat/multimer_dom_body"/>
</dbReference>
<dbReference type="InterPro" id="IPR014729">
    <property type="entry name" value="Rossmann-like_a/b/a_fold"/>
</dbReference>
<dbReference type="NCBIfam" id="TIGR00032">
    <property type="entry name" value="argG"/>
    <property type="match status" value="1"/>
</dbReference>
<dbReference type="NCBIfam" id="NF001770">
    <property type="entry name" value="PRK00509.1"/>
    <property type="match status" value="1"/>
</dbReference>
<dbReference type="PANTHER" id="PTHR11587">
    <property type="entry name" value="ARGININOSUCCINATE SYNTHASE"/>
    <property type="match status" value="1"/>
</dbReference>
<dbReference type="PANTHER" id="PTHR11587:SF2">
    <property type="entry name" value="ARGININOSUCCINATE SYNTHASE"/>
    <property type="match status" value="1"/>
</dbReference>
<dbReference type="Pfam" id="PF20979">
    <property type="entry name" value="Arginosuc_syn_C"/>
    <property type="match status" value="1"/>
</dbReference>
<dbReference type="Pfam" id="PF00764">
    <property type="entry name" value="Arginosuc_synth"/>
    <property type="match status" value="1"/>
</dbReference>
<dbReference type="SUPFAM" id="SSF52402">
    <property type="entry name" value="Adenine nucleotide alpha hydrolases-like"/>
    <property type="match status" value="1"/>
</dbReference>
<dbReference type="SUPFAM" id="SSF69864">
    <property type="entry name" value="Argininosuccinate synthetase, C-terminal domain"/>
    <property type="match status" value="1"/>
</dbReference>
<dbReference type="PROSITE" id="PS00564">
    <property type="entry name" value="ARGININOSUCCIN_SYN_1"/>
    <property type="match status" value="1"/>
</dbReference>
<dbReference type="PROSITE" id="PS00565">
    <property type="entry name" value="ARGININOSUCCIN_SYN_2"/>
    <property type="match status" value="1"/>
</dbReference>